<evidence type="ECO:0000255" key="1">
    <source>
        <dbReference type="HAMAP-Rule" id="MF_01118"/>
    </source>
</evidence>
<protein>
    <recommendedName>
        <fullName evidence="1">Uncharacterized MFS-type transporter BMA10229_A2703</fullName>
    </recommendedName>
</protein>
<keyword id="KW-0997">Cell inner membrane</keyword>
<keyword id="KW-1003">Cell membrane</keyword>
<keyword id="KW-0472">Membrane</keyword>
<keyword id="KW-0812">Transmembrane</keyword>
<keyword id="KW-1133">Transmembrane helix</keyword>
<keyword id="KW-0813">Transport</keyword>
<comment type="subcellular location">
    <subcellularLocation>
        <location evidence="1">Cell inner membrane</location>
        <topology evidence="1">Multi-pass membrane protein</topology>
    </subcellularLocation>
</comment>
<comment type="similarity">
    <text evidence="1">Belongs to the major facilitator superfamily. YhhS family.</text>
</comment>
<reference key="1">
    <citation type="journal article" date="2010" name="Genome Biol. Evol.">
        <title>Continuing evolution of Burkholderia mallei through genome reduction and large-scale rearrangements.</title>
        <authorList>
            <person name="Losada L."/>
            <person name="Ronning C.M."/>
            <person name="DeShazer D."/>
            <person name="Woods D."/>
            <person name="Fedorova N."/>
            <person name="Kim H.S."/>
            <person name="Shabalina S.A."/>
            <person name="Pearson T.R."/>
            <person name="Brinkac L."/>
            <person name="Tan P."/>
            <person name="Nandi T."/>
            <person name="Crabtree J."/>
            <person name="Badger J."/>
            <person name="Beckstrom-Sternberg S."/>
            <person name="Saqib M."/>
            <person name="Schutzer S.E."/>
            <person name="Keim P."/>
            <person name="Nierman W.C."/>
        </authorList>
    </citation>
    <scope>NUCLEOTIDE SEQUENCE [LARGE SCALE GENOMIC DNA]</scope>
    <source>
        <strain>NCTC 10229</strain>
    </source>
</reference>
<dbReference type="EMBL" id="CP000546">
    <property type="protein sequence ID" value="ABN03115.1"/>
    <property type="molecule type" value="Genomic_DNA"/>
</dbReference>
<dbReference type="RefSeq" id="WP_004185668.1">
    <property type="nucleotide sequence ID" value="NC_008836.1"/>
</dbReference>
<dbReference type="SMR" id="A2S9N6"/>
<dbReference type="KEGG" id="bml:BMA10229_A2703"/>
<dbReference type="HOGENOM" id="CLU_001265_10_3_4"/>
<dbReference type="Proteomes" id="UP000002283">
    <property type="component" value="Chromosome I"/>
</dbReference>
<dbReference type="GO" id="GO:0005886">
    <property type="term" value="C:plasma membrane"/>
    <property type="evidence" value="ECO:0007669"/>
    <property type="project" value="UniProtKB-SubCell"/>
</dbReference>
<dbReference type="GO" id="GO:0022857">
    <property type="term" value="F:transmembrane transporter activity"/>
    <property type="evidence" value="ECO:0007669"/>
    <property type="project" value="UniProtKB-UniRule"/>
</dbReference>
<dbReference type="CDD" id="cd17489">
    <property type="entry name" value="MFS_YfcJ_like"/>
    <property type="match status" value="1"/>
</dbReference>
<dbReference type="Gene3D" id="1.20.1250.20">
    <property type="entry name" value="MFS general substrate transporter like domains"/>
    <property type="match status" value="1"/>
</dbReference>
<dbReference type="HAMAP" id="MF_01118">
    <property type="entry name" value="MFS_YhhS"/>
    <property type="match status" value="1"/>
</dbReference>
<dbReference type="InterPro" id="IPR011701">
    <property type="entry name" value="MFS"/>
</dbReference>
<dbReference type="InterPro" id="IPR020846">
    <property type="entry name" value="MFS_dom"/>
</dbReference>
<dbReference type="InterPro" id="IPR036259">
    <property type="entry name" value="MFS_trans_sf"/>
</dbReference>
<dbReference type="InterPro" id="IPR050171">
    <property type="entry name" value="MFS_Transporters"/>
</dbReference>
<dbReference type="InterPro" id="IPR023008">
    <property type="entry name" value="MFS_YhhS-like"/>
</dbReference>
<dbReference type="NCBIfam" id="NF003477">
    <property type="entry name" value="PRK05122.1"/>
    <property type="match status" value="1"/>
</dbReference>
<dbReference type="NCBIfam" id="NF009048">
    <property type="entry name" value="PRK12382.1"/>
    <property type="match status" value="1"/>
</dbReference>
<dbReference type="PANTHER" id="PTHR23517:SF13">
    <property type="entry name" value="MAJOR FACILITATOR SUPERFAMILY MFS_1"/>
    <property type="match status" value="1"/>
</dbReference>
<dbReference type="PANTHER" id="PTHR23517">
    <property type="entry name" value="RESISTANCE PROTEIN MDTM, PUTATIVE-RELATED-RELATED"/>
    <property type="match status" value="1"/>
</dbReference>
<dbReference type="Pfam" id="PF07690">
    <property type="entry name" value="MFS_1"/>
    <property type="match status" value="1"/>
</dbReference>
<dbReference type="SUPFAM" id="SSF103473">
    <property type="entry name" value="MFS general substrate transporter"/>
    <property type="match status" value="1"/>
</dbReference>
<dbReference type="PROSITE" id="PS50850">
    <property type="entry name" value="MFS"/>
    <property type="match status" value="1"/>
</dbReference>
<name>Y5003_BURM9</name>
<accession>A2S9N6</accession>
<gene>
    <name type="ordered locus">BMA10229_A2703</name>
</gene>
<organism>
    <name type="scientific">Burkholderia mallei (strain NCTC 10229)</name>
    <dbReference type="NCBI Taxonomy" id="412022"/>
    <lineage>
        <taxon>Bacteria</taxon>
        <taxon>Pseudomonadati</taxon>
        <taxon>Pseudomonadota</taxon>
        <taxon>Betaproteobacteria</taxon>
        <taxon>Burkholderiales</taxon>
        <taxon>Burkholderiaceae</taxon>
        <taxon>Burkholderia</taxon>
        <taxon>pseudomallei group</taxon>
    </lineage>
</organism>
<proteinExistence type="inferred from homology"/>
<feature type="chain" id="PRO_1000137228" description="Uncharacterized MFS-type transporter BMA10229_A2703">
    <location>
        <begin position="1"/>
        <end position="407"/>
    </location>
</feature>
<feature type="transmembrane region" description="Helical" evidence="1">
    <location>
        <begin position="22"/>
        <end position="42"/>
    </location>
</feature>
<feature type="transmembrane region" description="Helical" evidence="1">
    <location>
        <begin position="51"/>
        <end position="71"/>
    </location>
</feature>
<feature type="transmembrane region" description="Helical" evidence="1">
    <location>
        <begin position="101"/>
        <end position="121"/>
    </location>
</feature>
<feature type="transmembrane region" description="Helical" evidence="1">
    <location>
        <begin position="126"/>
        <end position="146"/>
    </location>
</feature>
<feature type="transmembrane region" description="Helical" evidence="1">
    <location>
        <begin position="154"/>
        <end position="174"/>
    </location>
</feature>
<feature type="transmembrane region" description="Helical" evidence="1">
    <location>
        <begin position="179"/>
        <end position="199"/>
    </location>
</feature>
<feature type="transmembrane region" description="Helical" evidence="1">
    <location>
        <begin position="227"/>
        <end position="247"/>
    </location>
</feature>
<feature type="transmembrane region" description="Helical" evidence="1">
    <location>
        <begin position="258"/>
        <end position="278"/>
    </location>
</feature>
<feature type="transmembrane region" description="Helical" evidence="1">
    <location>
        <begin position="286"/>
        <end position="306"/>
    </location>
</feature>
<feature type="transmembrane region" description="Helical" evidence="1">
    <location>
        <begin position="309"/>
        <end position="329"/>
    </location>
</feature>
<feature type="transmembrane region" description="Helical" evidence="1">
    <location>
        <begin position="347"/>
        <end position="367"/>
    </location>
</feature>
<feature type="transmembrane region" description="Helical" evidence="1">
    <location>
        <begin position="369"/>
        <end position="389"/>
    </location>
</feature>
<sequence>MSADSADSVPSPRSAFATTLQIVSVVSFTFICYLTIGLPLAVLPGFVHDELGFSAIVAGAAISVQYFATLASRPLAGRCADTLGPKRTVLRGLAACGASGALLLSAFAFARWPAASIGLLVASRLVLGIGESLVGTGAILWGIGRVGTAHNARVISWNGIATYGALAIGAPVGVAISHALIPAVLGMLVIALAALGYYLARLITPVPLVHGERMSYASVLTRVLPHGLGLALGSAGFGSIATFITLYYAARHWPNAALSLTVFGTLFIGARLLFANTIKTHGGFRVAIVSFAFECAGLLMLWLAPVPHVALVGAALTGFGFALIFPALGVEAVALVPPASRGAALSAYSVFLDLSLGITGPLAGYVAGAFGYPQVFLCAAVAAAAGVALSTVLYQRQARLSGSGAAA</sequence>